<sequence>MKKSGLLNPDLCYAIARLGHTDTWAVADCGLPIPEHVEIIDLALVFGIPTFEQVLNALKPEVVVEGAVIAEGTPERIREMVDTDVEVVTHEELKAQLAECAFVIRTGETTAYANVIFKSGVAF</sequence>
<feature type="chain" id="PRO_0000346190" description="D-ribose pyranase">
    <location>
        <begin position="1"/>
        <end position="123"/>
    </location>
</feature>
<feature type="active site" description="Proton donor" evidence="1">
    <location>
        <position position="20"/>
    </location>
</feature>
<feature type="binding site" evidence="1">
    <location>
        <position position="28"/>
    </location>
    <ligand>
        <name>substrate</name>
    </ligand>
</feature>
<feature type="binding site" evidence="1">
    <location>
        <position position="90"/>
    </location>
    <ligand>
        <name>substrate</name>
    </ligand>
</feature>
<feature type="binding site" evidence="1">
    <location>
        <begin position="112"/>
        <end position="114"/>
    </location>
    <ligand>
        <name>substrate</name>
    </ligand>
</feature>
<reference key="1">
    <citation type="journal article" date="2007" name="Microbiology">
        <title>Comparative analysis of the Corynebacterium glutamicum group and complete genome sequence of strain R.</title>
        <authorList>
            <person name="Yukawa H."/>
            <person name="Omumasaba C.A."/>
            <person name="Nonaka H."/>
            <person name="Kos P."/>
            <person name="Okai N."/>
            <person name="Suzuki N."/>
            <person name="Suda M."/>
            <person name="Tsuge Y."/>
            <person name="Watanabe J."/>
            <person name="Ikeda Y."/>
            <person name="Vertes A.A."/>
            <person name="Inui M."/>
        </authorList>
    </citation>
    <scope>NUCLEOTIDE SEQUENCE [LARGE SCALE GENOMIC DNA]</scope>
    <source>
        <strain>R</strain>
    </source>
</reference>
<organism>
    <name type="scientific">Corynebacterium glutamicum (strain R)</name>
    <dbReference type="NCBI Taxonomy" id="340322"/>
    <lineage>
        <taxon>Bacteria</taxon>
        <taxon>Bacillati</taxon>
        <taxon>Actinomycetota</taxon>
        <taxon>Actinomycetes</taxon>
        <taxon>Mycobacteriales</taxon>
        <taxon>Corynebacteriaceae</taxon>
        <taxon>Corynebacterium</taxon>
    </lineage>
</organism>
<keyword id="KW-0119">Carbohydrate metabolism</keyword>
<keyword id="KW-0963">Cytoplasm</keyword>
<keyword id="KW-0413">Isomerase</keyword>
<comment type="function">
    <text evidence="1">Catalyzes the interconversion of beta-pyran and beta-furan forms of D-ribose.</text>
</comment>
<comment type="catalytic activity">
    <reaction evidence="1">
        <text>beta-D-ribopyranose = beta-D-ribofuranose</text>
        <dbReference type="Rhea" id="RHEA:25432"/>
        <dbReference type="ChEBI" id="CHEBI:27476"/>
        <dbReference type="ChEBI" id="CHEBI:47002"/>
        <dbReference type="EC" id="5.4.99.62"/>
    </reaction>
</comment>
<comment type="pathway">
    <text evidence="1">Carbohydrate metabolism; D-ribose degradation; D-ribose 5-phosphate from beta-D-ribopyranose: step 1/2.</text>
</comment>
<comment type="subunit">
    <text evidence="1">Homodecamer.</text>
</comment>
<comment type="subcellular location">
    <subcellularLocation>
        <location evidence="1">Cytoplasm</location>
    </subcellularLocation>
</comment>
<comment type="similarity">
    <text evidence="1">Belongs to the RbsD / FucU family. RbsD subfamily.</text>
</comment>
<name>RBSD_CORGB</name>
<evidence type="ECO:0000255" key="1">
    <source>
        <dbReference type="HAMAP-Rule" id="MF_01661"/>
    </source>
</evidence>
<proteinExistence type="inferred from homology"/>
<dbReference type="EC" id="5.4.99.62" evidence="1"/>
<dbReference type="EMBL" id="AP009044">
    <property type="protein sequence ID" value="BAF54313.1"/>
    <property type="molecule type" value="Genomic_DNA"/>
</dbReference>
<dbReference type="RefSeq" id="WP_003854747.1">
    <property type="nucleotide sequence ID" value="NC_009342.1"/>
</dbReference>
<dbReference type="SMR" id="A4QDL6"/>
<dbReference type="KEGG" id="cgt:cgR_1332"/>
<dbReference type="HOGENOM" id="CLU_135498_0_0_11"/>
<dbReference type="PhylomeDB" id="A4QDL6"/>
<dbReference type="UniPathway" id="UPA00916">
    <property type="reaction ID" value="UER00888"/>
</dbReference>
<dbReference type="Proteomes" id="UP000006698">
    <property type="component" value="Chromosome"/>
</dbReference>
<dbReference type="GO" id="GO:0005829">
    <property type="term" value="C:cytosol"/>
    <property type="evidence" value="ECO:0007669"/>
    <property type="project" value="TreeGrafter"/>
</dbReference>
<dbReference type="GO" id="GO:0062193">
    <property type="term" value="F:D-ribose pyranase activity"/>
    <property type="evidence" value="ECO:0007669"/>
    <property type="project" value="UniProtKB-EC"/>
</dbReference>
<dbReference type="GO" id="GO:0016872">
    <property type="term" value="F:intramolecular lyase activity"/>
    <property type="evidence" value="ECO:0007669"/>
    <property type="project" value="UniProtKB-UniRule"/>
</dbReference>
<dbReference type="GO" id="GO:0048029">
    <property type="term" value="F:monosaccharide binding"/>
    <property type="evidence" value="ECO:0007669"/>
    <property type="project" value="InterPro"/>
</dbReference>
<dbReference type="GO" id="GO:0019303">
    <property type="term" value="P:D-ribose catabolic process"/>
    <property type="evidence" value="ECO:0007669"/>
    <property type="project" value="UniProtKB-UniRule"/>
</dbReference>
<dbReference type="Gene3D" id="3.40.1650.10">
    <property type="entry name" value="RbsD-like domain"/>
    <property type="match status" value="1"/>
</dbReference>
<dbReference type="HAMAP" id="MF_01661">
    <property type="entry name" value="D_rib_pyranase"/>
    <property type="match status" value="1"/>
</dbReference>
<dbReference type="InterPro" id="IPR023064">
    <property type="entry name" value="D-ribose_pyranase"/>
</dbReference>
<dbReference type="InterPro" id="IPR023750">
    <property type="entry name" value="RbsD-like_sf"/>
</dbReference>
<dbReference type="InterPro" id="IPR007721">
    <property type="entry name" value="RbsD_FucU"/>
</dbReference>
<dbReference type="NCBIfam" id="NF008761">
    <property type="entry name" value="PRK11797.1"/>
    <property type="match status" value="1"/>
</dbReference>
<dbReference type="PANTHER" id="PTHR37831">
    <property type="entry name" value="D-RIBOSE PYRANASE"/>
    <property type="match status" value="1"/>
</dbReference>
<dbReference type="PANTHER" id="PTHR37831:SF1">
    <property type="entry name" value="D-RIBOSE PYRANASE"/>
    <property type="match status" value="1"/>
</dbReference>
<dbReference type="Pfam" id="PF05025">
    <property type="entry name" value="RbsD_FucU"/>
    <property type="match status" value="1"/>
</dbReference>
<dbReference type="SUPFAM" id="SSF102546">
    <property type="entry name" value="RbsD-like"/>
    <property type="match status" value="1"/>
</dbReference>
<accession>A4QDL6</accession>
<protein>
    <recommendedName>
        <fullName evidence="1">D-ribose pyranase</fullName>
        <ecNumber evidence="1">5.4.99.62</ecNumber>
    </recommendedName>
</protein>
<gene>
    <name evidence="1" type="primary">rbsD</name>
    <name type="ordered locus">cgR_1332</name>
</gene>